<evidence type="ECO:0000255" key="1">
    <source>
        <dbReference type="HAMAP-Rule" id="MF_01235"/>
    </source>
</evidence>
<name>NANE_OCEIH</name>
<organism>
    <name type="scientific">Oceanobacillus iheyensis (strain DSM 14371 / CIP 107618 / JCM 11309 / KCTC 3954 / HTE831)</name>
    <dbReference type="NCBI Taxonomy" id="221109"/>
    <lineage>
        <taxon>Bacteria</taxon>
        <taxon>Bacillati</taxon>
        <taxon>Bacillota</taxon>
        <taxon>Bacilli</taxon>
        <taxon>Bacillales</taxon>
        <taxon>Bacillaceae</taxon>
        <taxon>Oceanobacillus</taxon>
    </lineage>
</organism>
<reference key="1">
    <citation type="journal article" date="2002" name="Nucleic Acids Res.">
        <title>Genome sequence of Oceanobacillus iheyensis isolated from the Iheya Ridge and its unexpected adaptive capabilities to extreme environments.</title>
        <authorList>
            <person name="Takami H."/>
            <person name="Takaki Y."/>
            <person name="Uchiyama I."/>
        </authorList>
    </citation>
    <scope>NUCLEOTIDE SEQUENCE [LARGE SCALE GENOMIC DNA]</scope>
    <source>
        <strain>DSM 14371 / CIP 107618 / JCM 11309 / KCTC 3954 / HTE831</strain>
    </source>
</reference>
<comment type="function">
    <text evidence="1">Converts N-acetylmannosamine-6-phosphate (ManNAc-6-P) to N-acetylglucosamine-6-phosphate (GlcNAc-6-P).</text>
</comment>
<comment type="catalytic activity">
    <reaction evidence="1">
        <text>an N-acyl-D-glucosamine 6-phosphate = an N-acyl-D-mannosamine 6-phosphate</text>
        <dbReference type="Rhea" id="RHEA:23932"/>
        <dbReference type="ChEBI" id="CHEBI:57599"/>
        <dbReference type="ChEBI" id="CHEBI:57666"/>
        <dbReference type="EC" id="5.1.3.9"/>
    </reaction>
</comment>
<comment type="pathway">
    <text evidence="1">Amino-sugar metabolism; N-acetylneuraminate degradation; D-fructose 6-phosphate from N-acetylneuraminate: step 3/5.</text>
</comment>
<comment type="similarity">
    <text evidence="1">Belongs to the NanE family.</text>
</comment>
<keyword id="KW-0119">Carbohydrate metabolism</keyword>
<keyword id="KW-0413">Isomerase</keyword>
<keyword id="KW-1185">Reference proteome</keyword>
<sequence>MLDQIKNSLIVSCQALPDEPLHSSFIMSKMALAAKQGGAKGIRANTKEDIIQIKEEVNLPVVGIVKRDYKDSEVFITATYKEIDELLESNCEMIAIDATTRNRPQDIKLQDLVDYTKRLNSEVELMADIATLEEAKIAEKLGFDCISTTLHGYTSNTSNHKIYDNDFSFLKNLLSEVKIPIIAEGNILTPEMFKRCIELGAHACVVGGAITRPQEITKRFIG</sequence>
<protein>
    <recommendedName>
        <fullName evidence="1">Putative N-acetylmannosamine-6-phosphate 2-epimerase</fullName>
        <ecNumber evidence="1">5.1.3.9</ecNumber>
    </recommendedName>
    <alternativeName>
        <fullName evidence="1">ManNAc-6-P epimerase</fullName>
    </alternativeName>
</protein>
<feature type="chain" id="PRO_0000179787" description="Putative N-acetylmannosamine-6-phosphate 2-epimerase">
    <location>
        <begin position="1"/>
        <end position="222"/>
    </location>
</feature>
<accession>Q8EMP6</accession>
<dbReference type="EC" id="5.1.3.9" evidence="1"/>
<dbReference type="EMBL" id="BA000028">
    <property type="protein sequence ID" value="BAC14751.1"/>
    <property type="molecule type" value="Genomic_DNA"/>
</dbReference>
<dbReference type="RefSeq" id="WP_011067191.1">
    <property type="nucleotide sequence ID" value="NC_004193.1"/>
</dbReference>
<dbReference type="SMR" id="Q8EMP6"/>
<dbReference type="STRING" id="221109.gene:10735047"/>
<dbReference type="KEGG" id="oih:OB2795"/>
<dbReference type="eggNOG" id="COG3010">
    <property type="taxonomic scope" value="Bacteria"/>
</dbReference>
<dbReference type="HOGENOM" id="CLU_086300_1_0_9"/>
<dbReference type="OrthoDB" id="9781704at2"/>
<dbReference type="PhylomeDB" id="Q8EMP6"/>
<dbReference type="UniPathway" id="UPA00629">
    <property type="reaction ID" value="UER00682"/>
</dbReference>
<dbReference type="Proteomes" id="UP000000822">
    <property type="component" value="Chromosome"/>
</dbReference>
<dbReference type="GO" id="GO:0005829">
    <property type="term" value="C:cytosol"/>
    <property type="evidence" value="ECO:0007669"/>
    <property type="project" value="TreeGrafter"/>
</dbReference>
<dbReference type="GO" id="GO:0047465">
    <property type="term" value="F:N-acylglucosamine-6-phosphate 2-epimerase activity"/>
    <property type="evidence" value="ECO:0007669"/>
    <property type="project" value="UniProtKB-EC"/>
</dbReference>
<dbReference type="GO" id="GO:0005975">
    <property type="term" value="P:carbohydrate metabolic process"/>
    <property type="evidence" value="ECO:0007669"/>
    <property type="project" value="UniProtKB-UniRule"/>
</dbReference>
<dbReference type="GO" id="GO:0006053">
    <property type="term" value="P:N-acetylmannosamine catabolic process"/>
    <property type="evidence" value="ECO:0007669"/>
    <property type="project" value="TreeGrafter"/>
</dbReference>
<dbReference type="GO" id="GO:0019262">
    <property type="term" value="P:N-acetylneuraminate catabolic process"/>
    <property type="evidence" value="ECO:0007669"/>
    <property type="project" value="UniProtKB-UniRule"/>
</dbReference>
<dbReference type="CDD" id="cd04729">
    <property type="entry name" value="NanE"/>
    <property type="match status" value="1"/>
</dbReference>
<dbReference type="FunFam" id="3.20.20.70:FF:000035">
    <property type="entry name" value="Putative N-acetylmannosamine-6-phosphate 2-epimerase"/>
    <property type="match status" value="1"/>
</dbReference>
<dbReference type="Gene3D" id="3.20.20.70">
    <property type="entry name" value="Aldolase class I"/>
    <property type="match status" value="1"/>
</dbReference>
<dbReference type="HAMAP" id="MF_01235">
    <property type="entry name" value="ManNAc6P_epimer"/>
    <property type="match status" value="1"/>
</dbReference>
<dbReference type="InterPro" id="IPR013785">
    <property type="entry name" value="Aldolase_TIM"/>
</dbReference>
<dbReference type="InterPro" id="IPR007260">
    <property type="entry name" value="NanE"/>
</dbReference>
<dbReference type="InterPro" id="IPR011060">
    <property type="entry name" value="RibuloseP-bd_barrel"/>
</dbReference>
<dbReference type="NCBIfam" id="NF002231">
    <property type="entry name" value="PRK01130.1"/>
    <property type="match status" value="1"/>
</dbReference>
<dbReference type="PANTHER" id="PTHR36204">
    <property type="entry name" value="N-ACETYLMANNOSAMINE-6-PHOSPHATE 2-EPIMERASE-RELATED"/>
    <property type="match status" value="1"/>
</dbReference>
<dbReference type="PANTHER" id="PTHR36204:SF1">
    <property type="entry name" value="N-ACETYLMANNOSAMINE-6-PHOSPHATE 2-EPIMERASE-RELATED"/>
    <property type="match status" value="1"/>
</dbReference>
<dbReference type="Pfam" id="PF04131">
    <property type="entry name" value="NanE"/>
    <property type="match status" value="1"/>
</dbReference>
<dbReference type="SUPFAM" id="SSF51366">
    <property type="entry name" value="Ribulose-phoshate binding barrel"/>
    <property type="match status" value="1"/>
</dbReference>
<gene>
    <name evidence="1" type="primary">nanE</name>
    <name type="ordered locus">OB2795</name>
</gene>
<proteinExistence type="inferred from homology"/>